<evidence type="ECO:0000255" key="1">
    <source>
        <dbReference type="HAMAP-Rule" id="MF_00150"/>
    </source>
</evidence>
<keyword id="KW-0028">Amino-acid biosynthesis</keyword>
<keyword id="KW-0055">Arginine biosynthesis</keyword>
<keyword id="KW-0963">Cytoplasm</keyword>
<keyword id="KW-0521">NADP</keyword>
<keyword id="KW-0560">Oxidoreductase</keyword>
<keyword id="KW-1185">Reference proteome</keyword>
<sequence length="332" mass="37304">MKVGIIGASGYTGSELLRILANHPEAEVIAASSRRYEGQKIWKVHRFLKGFYDLEFCSPELSNFGDCDLVFTAVPHGEAMKYVPQLLDSGIKVVDISADYRLDKETYERVYGKKHEGYVEAVYGLTELHREEIKKANLVANPGCYPTGTILAASPLAKLELIERVVFDCKSGITGAGESPSAFTHYPNLHESIVPYKITEHRHYYEMVQELGRFQSDIKISFTPQVYPGSRGILTNAHVFLRGELTREELYRIYEEFYEDSFFVRIQESVSLSQVRGSNFCDISIHPGEDRVVVVSAIDNLVKGASGQAVQNMNLMMGFDETLGLRTPPLFP</sequence>
<name>ARGC_ARCFU</name>
<organism>
    <name type="scientific">Archaeoglobus fulgidus (strain ATCC 49558 / DSM 4304 / JCM 9628 / NBRC 100126 / VC-16)</name>
    <dbReference type="NCBI Taxonomy" id="224325"/>
    <lineage>
        <taxon>Archaea</taxon>
        <taxon>Methanobacteriati</taxon>
        <taxon>Methanobacteriota</taxon>
        <taxon>Archaeoglobi</taxon>
        <taxon>Archaeoglobales</taxon>
        <taxon>Archaeoglobaceae</taxon>
        <taxon>Archaeoglobus</taxon>
    </lineage>
</organism>
<comment type="function">
    <text evidence="1">Catalyzes the NADPH-dependent reduction of N-acetyl-5-glutamyl phosphate to yield N-acetyl-L-glutamate 5-semialdehyde.</text>
</comment>
<comment type="catalytic activity">
    <reaction evidence="1">
        <text>N-acetyl-L-glutamate 5-semialdehyde + phosphate + NADP(+) = N-acetyl-L-glutamyl 5-phosphate + NADPH + H(+)</text>
        <dbReference type="Rhea" id="RHEA:21588"/>
        <dbReference type="ChEBI" id="CHEBI:15378"/>
        <dbReference type="ChEBI" id="CHEBI:29123"/>
        <dbReference type="ChEBI" id="CHEBI:43474"/>
        <dbReference type="ChEBI" id="CHEBI:57783"/>
        <dbReference type="ChEBI" id="CHEBI:57936"/>
        <dbReference type="ChEBI" id="CHEBI:58349"/>
        <dbReference type="EC" id="1.2.1.38"/>
    </reaction>
</comment>
<comment type="pathway">
    <text evidence="1">Amino-acid biosynthesis; L-arginine biosynthesis; N(2)-acetyl-L-ornithine from L-glutamate: step 3/4.</text>
</comment>
<comment type="subcellular location">
    <subcellularLocation>
        <location evidence="1">Cytoplasm</location>
    </subcellularLocation>
</comment>
<comment type="similarity">
    <text evidence="1">Belongs to the NAGSA dehydrogenase family. Type 1 subfamily.</text>
</comment>
<protein>
    <recommendedName>
        <fullName evidence="1">N-acetyl-gamma-glutamyl-phosphate reductase</fullName>
        <shortName evidence="1">AGPR</shortName>
        <ecNumber evidence="1">1.2.1.38</ecNumber>
    </recommendedName>
    <alternativeName>
        <fullName evidence="1">N-acetyl-glutamate semialdehyde dehydrogenase</fullName>
        <shortName evidence="1">NAGSA dehydrogenase</shortName>
    </alternativeName>
</protein>
<dbReference type="EC" id="1.2.1.38" evidence="1"/>
<dbReference type="EMBL" id="AE000782">
    <property type="protein sequence ID" value="AAB89185.1"/>
    <property type="molecule type" value="Genomic_DNA"/>
</dbReference>
<dbReference type="PIR" id="F69508">
    <property type="entry name" value="F69508"/>
</dbReference>
<dbReference type="RefSeq" id="WP_010879563.1">
    <property type="nucleotide sequence ID" value="NC_000917.1"/>
</dbReference>
<dbReference type="SMR" id="O28208"/>
<dbReference type="STRING" id="224325.AF_2071"/>
<dbReference type="PaxDb" id="224325-AF_2071"/>
<dbReference type="EnsemblBacteria" id="AAB89185">
    <property type="protein sequence ID" value="AAB89185"/>
    <property type="gene ID" value="AF_2071"/>
</dbReference>
<dbReference type="GeneID" id="1485298"/>
<dbReference type="KEGG" id="afu:AF_2071"/>
<dbReference type="eggNOG" id="arCOG00495">
    <property type="taxonomic scope" value="Archaea"/>
</dbReference>
<dbReference type="HOGENOM" id="CLU_006384_0_1_2"/>
<dbReference type="OrthoDB" id="372053at2157"/>
<dbReference type="PhylomeDB" id="O28208"/>
<dbReference type="UniPathway" id="UPA00068">
    <property type="reaction ID" value="UER00108"/>
</dbReference>
<dbReference type="Proteomes" id="UP000002199">
    <property type="component" value="Chromosome"/>
</dbReference>
<dbReference type="GO" id="GO:0005737">
    <property type="term" value="C:cytoplasm"/>
    <property type="evidence" value="ECO:0007669"/>
    <property type="project" value="UniProtKB-SubCell"/>
</dbReference>
<dbReference type="GO" id="GO:0003942">
    <property type="term" value="F:N-acetyl-gamma-glutamyl-phosphate reductase activity"/>
    <property type="evidence" value="ECO:0007669"/>
    <property type="project" value="UniProtKB-UniRule"/>
</dbReference>
<dbReference type="GO" id="GO:0051287">
    <property type="term" value="F:NAD binding"/>
    <property type="evidence" value="ECO:0007669"/>
    <property type="project" value="InterPro"/>
</dbReference>
<dbReference type="GO" id="GO:0070401">
    <property type="term" value="F:NADP+ binding"/>
    <property type="evidence" value="ECO:0007669"/>
    <property type="project" value="InterPro"/>
</dbReference>
<dbReference type="GO" id="GO:0006526">
    <property type="term" value="P:L-arginine biosynthetic process"/>
    <property type="evidence" value="ECO:0007669"/>
    <property type="project" value="UniProtKB-UniRule"/>
</dbReference>
<dbReference type="CDD" id="cd23934">
    <property type="entry name" value="AGPR_1_C"/>
    <property type="match status" value="1"/>
</dbReference>
<dbReference type="CDD" id="cd17895">
    <property type="entry name" value="AGPR_1_N"/>
    <property type="match status" value="1"/>
</dbReference>
<dbReference type="Gene3D" id="3.30.360.10">
    <property type="entry name" value="Dihydrodipicolinate Reductase, domain 2"/>
    <property type="match status" value="1"/>
</dbReference>
<dbReference type="Gene3D" id="3.40.50.720">
    <property type="entry name" value="NAD(P)-binding Rossmann-like Domain"/>
    <property type="match status" value="1"/>
</dbReference>
<dbReference type="HAMAP" id="MF_00150">
    <property type="entry name" value="ArgC_type1"/>
    <property type="match status" value="1"/>
</dbReference>
<dbReference type="InterPro" id="IPR023013">
    <property type="entry name" value="AGPR_AS"/>
</dbReference>
<dbReference type="InterPro" id="IPR000706">
    <property type="entry name" value="AGPR_type-1"/>
</dbReference>
<dbReference type="InterPro" id="IPR036291">
    <property type="entry name" value="NAD(P)-bd_dom_sf"/>
</dbReference>
<dbReference type="InterPro" id="IPR050085">
    <property type="entry name" value="NAGSA_dehydrogenase"/>
</dbReference>
<dbReference type="InterPro" id="IPR000534">
    <property type="entry name" value="Semialdehyde_DH_NAD-bd"/>
</dbReference>
<dbReference type="NCBIfam" id="TIGR01850">
    <property type="entry name" value="argC"/>
    <property type="match status" value="1"/>
</dbReference>
<dbReference type="PANTHER" id="PTHR32338:SF10">
    <property type="entry name" value="N-ACETYL-GAMMA-GLUTAMYL-PHOSPHATE REDUCTASE, CHLOROPLASTIC-RELATED"/>
    <property type="match status" value="1"/>
</dbReference>
<dbReference type="PANTHER" id="PTHR32338">
    <property type="entry name" value="N-ACETYL-GAMMA-GLUTAMYL-PHOSPHATE REDUCTASE, CHLOROPLASTIC-RELATED-RELATED"/>
    <property type="match status" value="1"/>
</dbReference>
<dbReference type="Pfam" id="PF01118">
    <property type="entry name" value="Semialdhyde_dh"/>
    <property type="match status" value="1"/>
</dbReference>
<dbReference type="Pfam" id="PF22698">
    <property type="entry name" value="Semialdhyde_dhC_1"/>
    <property type="match status" value="1"/>
</dbReference>
<dbReference type="SMART" id="SM00859">
    <property type="entry name" value="Semialdhyde_dh"/>
    <property type="match status" value="1"/>
</dbReference>
<dbReference type="SUPFAM" id="SSF55347">
    <property type="entry name" value="Glyceraldehyde-3-phosphate dehydrogenase-like, C-terminal domain"/>
    <property type="match status" value="1"/>
</dbReference>
<dbReference type="SUPFAM" id="SSF51735">
    <property type="entry name" value="NAD(P)-binding Rossmann-fold domains"/>
    <property type="match status" value="1"/>
</dbReference>
<dbReference type="PROSITE" id="PS01224">
    <property type="entry name" value="ARGC"/>
    <property type="match status" value="1"/>
</dbReference>
<feature type="chain" id="PRO_0000112483" description="N-acetyl-gamma-glutamyl-phosphate reductase">
    <location>
        <begin position="1"/>
        <end position="332"/>
    </location>
</feature>
<feature type="active site" evidence="1">
    <location>
        <position position="144"/>
    </location>
</feature>
<gene>
    <name evidence="1" type="primary">argC</name>
    <name type="ordered locus">AF_2071</name>
</gene>
<accession>O28208</accession>
<proteinExistence type="inferred from homology"/>
<reference key="1">
    <citation type="journal article" date="1997" name="Nature">
        <title>The complete genome sequence of the hyperthermophilic, sulphate-reducing archaeon Archaeoglobus fulgidus.</title>
        <authorList>
            <person name="Klenk H.-P."/>
            <person name="Clayton R.A."/>
            <person name="Tomb J.-F."/>
            <person name="White O."/>
            <person name="Nelson K.E."/>
            <person name="Ketchum K.A."/>
            <person name="Dodson R.J."/>
            <person name="Gwinn M.L."/>
            <person name="Hickey E.K."/>
            <person name="Peterson J.D."/>
            <person name="Richardson D.L."/>
            <person name="Kerlavage A.R."/>
            <person name="Graham D.E."/>
            <person name="Kyrpides N.C."/>
            <person name="Fleischmann R.D."/>
            <person name="Quackenbush J."/>
            <person name="Lee N.H."/>
            <person name="Sutton G.G."/>
            <person name="Gill S.R."/>
            <person name="Kirkness E.F."/>
            <person name="Dougherty B.A."/>
            <person name="McKenney K."/>
            <person name="Adams M.D."/>
            <person name="Loftus B.J."/>
            <person name="Peterson S.N."/>
            <person name="Reich C.I."/>
            <person name="McNeil L.K."/>
            <person name="Badger J.H."/>
            <person name="Glodek A."/>
            <person name="Zhou L."/>
            <person name="Overbeek R."/>
            <person name="Gocayne J.D."/>
            <person name="Weidman J.F."/>
            <person name="McDonald L.A."/>
            <person name="Utterback T.R."/>
            <person name="Cotton M.D."/>
            <person name="Spriggs T."/>
            <person name="Artiach P."/>
            <person name="Kaine B.P."/>
            <person name="Sykes S.M."/>
            <person name="Sadow P.W."/>
            <person name="D'Andrea K.P."/>
            <person name="Bowman C."/>
            <person name="Fujii C."/>
            <person name="Garland S.A."/>
            <person name="Mason T.M."/>
            <person name="Olsen G.J."/>
            <person name="Fraser C.M."/>
            <person name="Smith H.O."/>
            <person name="Woese C.R."/>
            <person name="Venter J.C."/>
        </authorList>
    </citation>
    <scope>NUCLEOTIDE SEQUENCE [LARGE SCALE GENOMIC DNA]</scope>
    <source>
        <strain>ATCC 49558 / DSM 4304 / JCM 9628 / NBRC 100126 / VC-16</strain>
    </source>
</reference>